<proteinExistence type="inferred from homology"/>
<gene>
    <name type="primary">N</name>
</gene>
<accession>Q08449</accession>
<sequence length="391" mass="42310">MTSALRETFTGLRDIKGGVLEDAETEYRPGTITLPLFFSKTDFDLEMIKRAVSQVGGEGTRRALGLLCAFVIAETVPSEAGTVAELLEALGFVLESLDTGAPPDATFADPNNKLAETIVKENVLEVVTGLLFTCALLTKYDVDKMATYCQNKLERLATSQGIGELVNFNANRGVLARIGSVLRPGQKLTKAIYGIILINLSDPAIAARAKALCAMRLSGTGMTMVGLFNQAAKNLGALPADLLEDLCMKSVVESARRIVRLMRIVAEAPGVAAKYGIMMSRMLGEGYFKAYGINENARITCILMNINDRYDDGTSRGLTGIKVSDPFRKLAREIARLLVLKYDGDGSTGEGASELIRRAEMASRGPDMGEEEEEDEEDDYSSEPGDSDSFR</sequence>
<name>NCAP_IHNVO</name>
<comment type="function">
    <text evidence="1">Encapsidates the genome, protecting it from nucleases. If expressed without protein P it binds non-specifically RNA and therefore can bind it's own mRNA. Interaction with protein P abolishes any non-specific RNA binding, and prevents phosphorylation. The soluble N-P complex encapsidates specifically the genomic RNA, with protein N protecting the genome like a pearl necklace. The encapsidated genomic RNA is termed the nucleocapsid (NC) and serves as template for viral transcription and replication. Protein N binds protein P in the NC through a different interaction, and can be phosphorylated. Subsequent viral replication is dependent on intracellular concentration of newly synthesized protein N. During replication, encapsidation by protein N is coupled to RNA synthesis and all replicative products are resistant to nucleases (By similarity).</text>
</comment>
<comment type="subunit">
    <text evidence="1">Homomultimerizes to form the nucleocapsid. Binds to viral genomic RNA (By similarity).</text>
</comment>
<comment type="subcellular location">
    <subcellularLocation>
        <location>Virion</location>
    </subcellularLocation>
    <subcellularLocation>
        <location evidence="1">Host cytoplasm</location>
    </subcellularLocation>
</comment>
<comment type="similarity">
    <text evidence="3">Belongs to the novirhabdovirus nucleocapsid protein family.</text>
</comment>
<dbReference type="EMBL" id="X73872">
    <property type="protein sequence ID" value="CAA52071.1"/>
    <property type="molecule type" value="Genomic_RNA"/>
</dbReference>
<dbReference type="EMBL" id="X89213">
    <property type="protein sequence ID" value="CAA61495.1"/>
    <property type="molecule type" value="Genomic_RNA"/>
</dbReference>
<dbReference type="Proteomes" id="UP000007211">
    <property type="component" value="Genome"/>
</dbReference>
<dbReference type="GO" id="GO:0019029">
    <property type="term" value="C:helical viral capsid"/>
    <property type="evidence" value="ECO:0007669"/>
    <property type="project" value="UniProtKB-KW"/>
</dbReference>
<dbReference type="GO" id="GO:0030430">
    <property type="term" value="C:host cell cytoplasm"/>
    <property type="evidence" value="ECO:0007669"/>
    <property type="project" value="UniProtKB-SubCell"/>
</dbReference>
<dbReference type="GO" id="GO:1990904">
    <property type="term" value="C:ribonucleoprotein complex"/>
    <property type="evidence" value="ECO:0007669"/>
    <property type="project" value="UniProtKB-KW"/>
</dbReference>
<dbReference type="GO" id="GO:0019013">
    <property type="term" value="C:viral nucleocapsid"/>
    <property type="evidence" value="ECO:0007669"/>
    <property type="project" value="UniProtKB-KW"/>
</dbReference>
<dbReference type="GO" id="GO:0003723">
    <property type="term" value="F:RNA binding"/>
    <property type="evidence" value="ECO:0007669"/>
    <property type="project" value="UniProtKB-KW"/>
</dbReference>
<dbReference type="InterPro" id="IPR004902">
    <property type="entry name" value="Rhabdo_ncap_2"/>
</dbReference>
<dbReference type="Pfam" id="PF03216">
    <property type="entry name" value="Rhabdo_ncap_2"/>
    <property type="match status" value="1"/>
</dbReference>
<keyword id="KW-0167">Capsid protein</keyword>
<keyword id="KW-1139">Helical capsid protein</keyword>
<keyword id="KW-1035">Host cytoplasm</keyword>
<keyword id="KW-0597">Phosphoprotein</keyword>
<keyword id="KW-0687">Ribonucleoprotein</keyword>
<keyword id="KW-0694">RNA-binding</keyword>
<keyword id="KW-0543">Viral nucleoprotein</keyword>
<keyword id="KW-0946">Virion</keyword>
<feature type="chain" id="PRO_0000282893" description="Nucleoprotein">
    <location>
        <begin position="1"/>
        <end position="391"/>
    </location>
</feature>
<feature type="region of interest" description="Disordered" evidence="2">
    <location>
        <begin position="346"/>
        <end position="391"/>
    </location>
</feature>
<feature type="compositionally biased region" description="Acidic residues" evidence="2">
    <location>
        <begin position="368"/>
        <end position="381"/>
    </location>
</feature>
<organism>
    <name type="scientific">Infectious hematopoietic necrosis virus (strain Oregon69)</name>
    <name type="common">IHNV</name>
    <dbReference type="NCBI Taxonomy" id="429315"/>
    <lineage>
        <taxon>Viruses</taxon>
        <taxon>Riboviria</taxon>
        <taxon>Orthornavirae</taxon>
        <taxon>Negarnaviricota</taxon>
        <taxon>Haploviricotina</taxon>
        <taxon>Monjiviricetes</taxon>
        <taxon>Mononegavirales</taxon>
        <taxon>Rhabdoviridae</taxon>
        <taxon>Gammarhabdovirinae</taxon>
        <taxon>Novirhabdovirus</taxon>
        <taxon>Novirhabdovirus salmonid</taxon>
    </lineage>
</organism>
<reference key="1">
    <citation type="journal article" date="1988" name="Virology">
        <title>The nucleocapsid gene of infectious hematopoietic necrosis virus, a fish rhabdovirus.</title>
        <authorList>
            <person name="Gilmore R.D. Jr."/>
            <person name="Leong J.-A."/>
        </authorList>
    </citation>
    <scope>NUCLEOTIDE SEQUENCE [GENOMIC RNA]</scope>
</reference>
<reference key="2">
    <citation type="journal article" date="1995" name="J. Gen. Virol.">
        <title>Complete genomic sequence of the fish rhabdovirus infectious haematopoietic necrosis virus.</title>
        <authorList>
            <person name="Schutze H."/>
            <person name="Enzmann P.J."/>
            <person name="Kuchling R."/>
            <person name="Mundt E."/>
            <person name="Niemann H."/>
            <person name="Mettenleiter T.C."/>
        </authorList>
    </citation>
    <scope>NUCLEOTIDE SEQUENCE [GENOMIC RNA]</scope>
</reference>
<organismHost>
    <name type="scientific">Salmo</name>
    <dbReference type="NCBI Taxonomy" id="8028"/>
</organismHost>
<evidence type="ECO:0000250" key="1"/>
<evidence type="ECO:0000256" key="2">
    <source>
        <dbReference type="SAM" id="MobiDB-lite"/>
    </source>
</evidence>
<evidence type="ECO:0000305" key="3"/>
<protein>
    <recommendedName>
        <fullName>Nucleoprotein</fullName>
        <shortName>NP</shortName>
    </recommendedName>
    <alternativeName>
        <fullName>Nucleocapsid protein</fullName>
        <shortName>Protein N</shortName>
    </alternativeName>
</protein>